<comment type="function">
    <text evidence="1">NDH shuttles electrons from NAD(P)H:plastoquinone, via FMN and iron-sulfur (Fe-S) centers, to quinones in the photosynthetic chain and possibly in a chloroplast respiratory chain. The immediate electron acceptor for the enzyme in this species is believed to be plastoquinone. Couples the redox reaction to proton translocation, and thus conserves the redox energy in a proton gradient.</text>
</comment>
<comment type="catalytic activity">
    <reaction evidence="1">
        <text>a plastoquinone + NADH + (n+1) H(+)(in) = a plastoquinol + NAD(+) + n H(+)(out)</text>
        <dbReference type="Rhea" id="RHEA:42608"/>
        <dbReference type="Rhea" id="RHEA-COMP:9561"/>
        <dbReference type="Rhea" id="RHEA-COMP:9562"/>
        <dbReference type="ChEBI" id="CHEBI:15378"/>
        <dbReference type="ChEBI" id="CHEBI:17757"/>
        <dbReference type="ChEBI" id="CHEBI:57540"/>
        <dbReference type="ChEBI" id="CHEBI:57945"/>
        <dbReference type="ChEBI" id="CHEBI:62192"/>
    </reaction>
</comment>
<comment type="catalytic activity">
    <reaction evidence="1">
        <text>a plastoquinone + NADPH + (n+1) H(+)(in) = a plastoquinol + NADP(+) + n H(+)(out)</text>
        <dbReference type="Rhea" id="RHEA:42612"/>
        <dbReference type="Rhea" id="RHEA-COMP:9561"/>
        <dbReference type="Rhea" id="RHEA-COMP:9562"/>
        <dbReference type="ChEBI" id="CHEBI:15378"/>
        <dbReference type="ChEBI" id="CHEBI:17757"/>
        <dbReference type="ChEBI" id="CHEBI:57783"/>
        <dbReference type="ChEBI" id="CHEBI:58349"/>
        <dbReference type="ChEBI" id="CHEBI:62192"/>
    </reaction>
</comment>
<comment type="subunit">
    <text evidence="1">NDH is composed of at least 16 different subunits, 5 of which are encoded in the nucleus.</text>
</comment>
<comment type="subcellular location">
    <subcellularLocation>
        <location evidence="1">Plastid</location>
        <location evidence="1">Chloroplast thylakoid membrane</location>
        <topology evidence="1">Peripheral membrane protein</topology>
        <orientation evidence="1">Stromal side</orientation>
    </subcellularLocation>
</comment>
<comment type="similarity">
    <text evidence="1">Belongs to the complex I 30 kDa subunit family.</text>
</comment>
<accession>A9LYA4</accession>
<accession>A9QAR7</accession>
<geneLocation type="chloroplast"/>
<dbReference type="EC" id="7.1.1.-" evidence="1"/>
<dbReference type="EMBL" id="EU016719">
    <property type="protein sequence ID" value="ABU85160.1"/>
    <property type="molecule type" value="Genomic_DNA"/>
</dbReference>
<dbReference type="EMBL" id="EU273602">
    <property type="protein sequence ID" value="ABX38747.1"/>
    <property type="molecule type" value="Genomic_DNA"/>
</dbReference>
<dbReference type="RefSeq" id="YP_001586185.1">
    <property type="nucleotide sequence ID" value="NC_010093.1"/>
</dbReference>
<dbReference type="SMR" id="A9LYA4"/>
<dbReference type="GeneID" id="5777800"/>
<dbReference type="GO" id="GO:0009535">
    <property type="term" value="C:chloroplast thylakoid membrane"/>
    <property type="evidence" value="ECO:0007669"/>
    <property type="project" value="UniProtKB-SubCell"/>
</dbReference>
<dbReference type="GO" id="GO:0008137">
    <property type="term" value="F:NADH dehydrogenase (ubiquinone) activity"/>
    <property type="evidence" value="ECO:0007669"/>
    <property type="project" value="InterPro"/>
</dbReference>
<dbReference type="GO" id="GO:0048038">
    <property type="term" value="F:quinone binding"/>
    <property type="evidence" value="ECO:0007669"/>
    <property type="project" value="UniProtKB-KW"/>
</dbReference>
<dbReference type="GO" id="GO:0019684">
    <property type="term" value="P:photosynthesis, light reaction"/>
    <property type="evidence" value="ECO:0007669"/>
    <property type="project" value="UniProtKB-UniRule"/>
</dbReference>
<dbReference type="FunFam" id="3.30.460.80:FF:000004">
    <property type="entry name" value="NAD(P)H-quinone oxidoreductase subunit J, chloroplastic"/>
    <property type="match status" value="1"/>
</dbReference>
<dbReference type="Gene3D" id="3.30.460.80">
    <property type="entry name" value="NADH:ubiquinone oxidoreductase, 30kDa subunit"/>
    <property type="match status" value="1"/>
</dbReference>
<dbReference type="HAMAP" id="MF_01357">
    <property type="entry name" value="NDH1_NuoC"/>
    <property type="match status" value="1"/>
</dbReference>
<dbReference type="InterPro" id="IPR010218">
    <property type="entry name" value="NADH_DH_suC"/>
</dbReference>
<dbReference type="InterPro" id="IPR037232">
    <property type="entry name" value="NADH_quin_OxRdtase_su_C/D-like"/>
</dbReference>
<dbReference type="InterPro" id="IPR001268">
    <property type="entry name" value="NADH_UbQ_OxRdtase_30kDa_su"/>
</dbReference>
<dbReference type="InterPro" id="IPR020396">
    <property type="entry name" value="NADH_UbQ_OxRdtase_CS"/>
</dbReference>
<dbReference type="NCBIfam" id="NF009141">
    <property type="entry name" value="PRK12494.1"/>
    <property type="match status" value="1"/>
</dbReference>
<dbReference type="PANTHER" id="PTHR10884:SF14">
    <property type="entry name" value="NADH DEHYDROGENASE [UBIQUINONE] IRON-SULFUR PROTEIN 3, MITOCHONDRIAL"/>
    <property type="match status" value="1"/>
</dbReference>
<dbReference type="PANTHER" id="PTHR10884">
    <property type="entry name" value="NADH DEHYDROGENASE UBIQUINONE IRON-SULFUR PROTEIN 3"/>
    <property type="match status" value="1"/>
</dbReference>
<dbReference type="Pfam" id="PF00329">
    <property type="entry name" value="Complex1_30kDa"/>
    <property type="match status" value="1"/>
</dbReference>
<dbReference type="SUPFAM" id="SSF143243">
    <property type="entry name" value="Nqo5-like"/>
    <property type="match status" value="1"/>
</dbReference>
<dbReference type="PROSITE" id="PS00542">
    <property type="entry name" value="COMPLEX1_30K"/>
    <property type="match status" value="1"/>
</dbReference>
<protein>
    <recommendedName>
        <fullName evidence="1">NAD(P)H-quinone oxidoreductase subunit J, chloroplastic</fullName>
        <ecNumber evidence="1">7.1.1.-</ecNumber>
    </recommendedName>
    <alternativeName>
        <fullName>NAD(P)H dehydrogenase subunit J</fullName>
    </alternativeName>
    <alternativeName>
        <fullName evidence="1">NADH-plastoquinone oxidoreductase subunit J</fullName>
    </alternativeName>
</protein>
<reference key="1">
    <citation type="journal article" date="2007" name="Proc. Natl. Acad. Sci. U.S.A.">
        <title>Analysis of 81 genes from 64 plastid genomes resolves relationships in angiosperms and identifies genome-scale evolutionary patterns.</title>
        <authorList>
            <person name="Jansen R.K."/>
            <person name="Cai Z."/>
            <person name="Raubeson L.A."/>
            <person name="Daniell H."/>
            <person name="dePamphilis C.W."/>
            <person name="Leebens-Mack J."/>
            <person name="Muller K.F."/>
            <person name="Guisinger-Bellian M."/>
            <person name="Haberle R.C."/>
            <person name="Hansen A.K."/>
            <person name="Chumley T.W."/>
            <person name="Lee S.B."/>
            <person name="Peery R."/>
            <person name="McNeal J.R."/>
            <person name="Kuehl J.V."/>
            <person name="Boore J.L."/>
        </authorList>
    </citation>
    <scope>NUCLEOTIDE SEQUENCE [GENOMIC DNA]</scope>
</reference>
<reference key="2">
    <citation type="submission" date="2007-11" db="EMBL/GenBank/DDBJ databases">
        <title>The complete chloroplast genome of Acorus americanus.</title>
        <authorList>
            <person name="Peery R.M."/>
            <person name="Chumley T.W."/>
            <person name="Kuehl J.V."/>
            <person name="Boore J.L."/>
            <person name="Raubeson L.A."/>
        </authorList>
    </citation>
    <scope>NUCLEOTIDE SEQUENCE [LARGE SCALE GENOMIC DNA]</scope>
</reference>
<sequence length="158" mass="18674">MQGRLSAWLVKHELVHRSLGFDYQGIEILQIKPEDWDSIAVISYVYGYNYLRSQCAYDVAPGGFLASVYHLTRIQYGVDQPEEVCIKVFAPRRNPKIPSVFWIWRSADFQERESYDMLGISYENHPRLKRILMPESWIGWPLRKDYIAPNFYEIQDAH</sequence>
<name>NDHJ_ACOCI</name>
<evidence type="ECO:0000255" key="1">
    <source>
        <dbReference type="HAMAP-Rule" id="MF_01357"/>
    </source>
</evidence>
<organism>
    <name type="scientific">Acorus calamus var. americanus</name>
    <name type="common">American sweet flag</name>
    <name type="synonym">Acorus americanus</name>
    <dbReference type="NCBI Taxonomy" id="263995"/>
    <lineage>
        <taxon>Eukaryota</taxon>
        <taxon>Viridiplantae</taxon>
        <taxon>Streptophyta</taxon>
        <taxon>Embryophyta</taxon>
        <taxon>Tracheophyta</taxon>
        <taxon>Spermatophyta</taxon>
        <taxon>Magnoliopsida</taxon>
        <taxon>Liliopsida</taxon>
        <taxon>Acoraceae</taxon>
        <taxon>Acorus</taxon>
    </lineage>
</organism>
<gene>
    <name evidence="1" type="primary">ndhJ</name>
</gene>
<keyword id="KW-0150">Chloroplast</keyword>
<keyword id="KW-0472">Membrane</keyword>
<keyword id="KW-0520">NAD</keyword>
<keyword id="KW-0521">NADP</keyword>
<keyword id="KW-0934">Plastid</keyword>
<keyword id="KW-0618">Plastoquinone</keyword>
<keyword id="KW-0874">Quinone</keyword>
<keyword id="KW-0793">Thylakoid</keyword>
<keyword id="KW-1278">Translocase</keyword>
<keyword id="KW-0813">Transport</keyword>
<feature type="chain" id="PRO_0000358235" description="NAD(P)H-quinone oxidoreductase subunit J, chloroplastic">
    <location>
        <begin position="1"/>
        <end position="158"/>
    </location>
</feature>
<proteinExistence type="inferred from homology"/>